<protein>
    <recommendedName>
        <fullName>Metallothionein B</fullName>
        <shortName>MT-B</shortName>
        <shortName>MT-II</shortName>
    </recommendedName>
</protein>
<proteinExistence type="inferred from homology"/>
<feature type="chain" id="PRO_0000197291" description="Metallothionein B">
    <location>
        <begin position="1"/>
        <end position="60"/>
    </location>
</feature>
<feature type="region of interest" description="Beta">
    <location>
        <begin position="1"/>
        <end position="28"/>
    </location>
</feature>
<feature type="region of interest" description="Alpha">
    <location>
        <begin position="29"/>
        <end position="60"/>
    </location>
</feature>
<feature type="binding site" evidence="2">
    <location>
        <position position="4"/>
    </location>
    <ligand>
        <name>a divalent metal cation</name>
        <dbReference type="ChEBI" id="CHEBI:60240"/>
        <label>1</label>
        <note>in cluster B</note>
    </ligand>
</feature>
<feature type="binding site" evidence="2">
    <location>
        <position position="6"/>
    </location>
    <ligand>
        <name>a divalent metal cation</name>
        <dbReference type="ChEBI" id="CHEBI:60240"/>
        <label>1</label>
        <note>in cluster B</note>
    </ligand>
</feature>
<feature type="binding site" evidence="2">
    <location>
        <position position="6"/>
    </location>
    <ligand>
        <name>a divalent metal cation</name>
        <dbReference type="ChEBI" id="CHEBI:60240"/>
        <label>2</label>
        <note>in cluster B</note>
    </ligand>
</feature>
<feature type="binding site" evidence="2">
    <location>
        <position position="12"/>
    </location>
    <ligand>
        <name>a divalent metal cation</name>
        <dbReference type="ChEBI" id="CHEBI:60240"/>
        <label>2</label>
        <note>in cluster B</note>
    </ligand>
</feature>
<feature type="binding site" evidence="2">
    <location>
        <position position="14"/>
    </location>
    <ligand>
        <name>a divalent metal cation</name>
        <dbReference type="ChEBI" id="CHEBI:60240"/>
        <label>2</label>
        <note>in cluster B</note>
    </ligand>
</feature>
<feature type="binding site" evidence="2">
    <location>
        <position position="14"/>
    </location>
    <ligand>
        <name>a divalent metal cation</name>
        <dbReference type="ChEBI" id="CHEBI:60240"/>
        <label>3</label>
        <note>in cluster B</note>
    </ligand>
</feature>
<feature type="binding site" evidence="2">
    <location>
        <position position="18"/>
    </location>
    <ligand>
        <name>a divalent metal cation</name>
        <dbReference type="ChEBI" id="CHEBI:60240"/>
        <label>3</label>
        <note>in cluster B</note>
    </ligand>
</feature>
<feature type="binding site" evidence="2">
    <location>
        <position position="20"/>
    </location>
    <ligand>
        <name>a divalent metal cation</name>
        <dbReference type="ChEBI" id="CHEBI:60240"/>
        <label>1</label>
        <note>in cluster B</note>
    </ligand>
</feature>
<feature type="binding site" evidence="2">
    <location>
        <position position="23"/>
    </location>
    <ligand>
        <name>a divalent metal cation</name>
        <dbReference type="ChEBI" id="CHEBI:60240"/>
        <label>1</label>
        <note>in cluster B</note>
    </ligand>
</feature>
<feature type="binding site" evidence="2">
    <location>
        <position position="23"/>
    </location>
    <ligand>
        <name>a divalent metal cation</name>
        <dbReference type="ChEBI" id="CHEBI:60240"/>
        <label>3</label>
        <note>in cluster B</note>
    </ligand>
</feature>
<feature type="binding site" evidence="2">
    <location>
        <position position="25"/>
    </location>
    <ligand>
        <name>a divalent metal cation</name>
        <dbReference type="ChEBI" id="CHEBI:60240"/>
        <label>2</label>
        <note>in cluster B</note>
    </ligand>
</feature>
<feature type="binding site" evidence="2">
    <location>
        <position position="28"/>
    </location>
    <ligand>
        <name>a divalent metal cation</name>
        <dbReference type="ChEBI" id="CHEBI:60240"/>
        <label>3</label>
        <note>in cluster B</note>
    </ligand>
</feature>
<feature type="binding site" evidence="2">
    <location>
        <position position="32"/>
    </location>
    <ligand>
        <name>a divalent metal cation</name>
        <dbReference type="ChEBI" id="CHEBI:60240"/>
        <label>4</label>
        <note>in cluster A</note>
    </ligand>
</feature>
<feature type="binding site" evidence="2">
    <location>
        <position position="33"/>
    </location>
    <ligand>
        <name>a divalent metal cation</name>
        <dbReference type="ChEBI" id="CHEBI:60240"/>
        <label>4</label>
        <note>in cluster A</note>
    </ligand>
</feature>
<feature type="binding site" evidence="2">
    <location>
        <position position="33"/>
    </location>
    <ligand>
        <name>a divalent metal cation</name>
        <dbReference type="ChEBI" id="CHEBI:60240"/>
        <label>5</label>
        <note>in cluster A</note>
    </ligand>
</feature>
<feature type="binding site" evidence="2">
    <location>
        <position position="35"/>
    </location>
    <ligand>
        <name>a divalent metal cation</name>
        <dbReference type="ChEBI" id="CHEBI:60240"/>
        <label>5</label>
        <note>in cluster A</note>
    </ligand>
</feature>
<feature type="binding site" evidence="2">
    <location>
        <position position="36"/>
    </location>
    <ligand>
        <name>a divalent metal cation</name>
        <dbReference type="ChEBI" id="CHEBI:60240"/>
        <label>5</label>
        <note>in cluster A</note>
    </ligand>
</feature>
<feature type="binding site" evidence="2">
    <location>
        <position position="36"/>
    </location>
    <ligand>
        <name>a divalent metal cation</name>
        <dbReference type="ChEBI" id="CHEBI:60240"/>
        <label>6</label>
        <note>in cluster A</note>
    </ligand>
</feature>
<feature type="binding site" evidence="2">
    <location>
        <position position="40"/>
    </location>
    <ligand>
        <name>a divalent metal cation</name>
        <dbReference type="ChEBI" id="CHEBI:60240"/>
        <label>6</label>
        <note>in cluster A</note>
    </ligand>
</feature>
<feature type="binding site" evidence="2">
    <location>
        <position position="43"/>
    </location>
    <ligand>
        <name>a divalent metal cation</name>
        <dbReference type="ChEBI" id="CHEBI:60240"/>
        <label>4</label>
        <note>in cluster A</note>
    </ligand>
</feature>
<feature type="binding site" evidence="2">
    <location>
        <position position="43"/>
    </location>
    <ligand>
        <name>a divalent metal cation</name>
        <dbReference type="ChEBI" id="CHEBI:60240"/>
        <label>6</label>
        <note>in cluster A</note>
    </ligand>
</feature>
<feature type="binding site" evidence="2">
    <location>
        <position position="47"/>
    </location>
    <ligand>
        <name>a divalent metal cation</name>
        <dbReference type="ChEBI" id="CHEBI:60240"/>
        <label>4</label>
        <note>in cluster A</note>
    </ligand>
</feature>
<feature type="binding site" evidence="2">
    <location>
        <position position="49"/>
    </location>
    <ligand>
        <name>a divalent metal cation</name>
        <dbReference type="ChEBI" id="CHEBI:60240"/>
        <label>5</label>
        <note>in cluster A</note>
    </ligand>
</feature>
<feature type="binding site" evidence="2">
    <location>
        <position position="49"/>
    </location>
    <ligand>
        <name>a divalent metal cation</name>
        <dbReference type="ChEBI" id="CHEBI:60240"/>
        <label>7</label>
        <note>in cluster A</note>
    </ligand>
</feature>
<feature type="binding site" evidence="3">
    <location>
        <position position="54"/>
    </location>
    <ligand>
        <name>a divalent metal cation</name>
        <dbReference type="ChEBI" id="CHEBI:60240"/>
        <label>7</label>
        <note>in cluster A</note>
    </ligand>
</feature>
<feature type="binding site" evidence="2">
    <location>
        <position position="58"/>
    </location>
    <ligand>
        <name>a divalent metal cation</name>
        <dbReference type="ChEBI" id="CHEBI:60240"/>
        <label>7</label>
        <note>in cluster A</note>
    </ligand>
</feature>
<feature type="binding site" evidence="2">
    <location>
        <position position="59"/>
    </location>
    <ligand>
        <name>a divalent metal cation</name>
        <dbReference type="ChEBI" id="CHEBI:60240"/>
        <label>6</label>
        <note>in cluster A</note>
    </ligand>
</feature>
<feature type="binding site" evidence="2">
    <location>
        <position position="59"/>
    </location>
    <ligand>
        <name>a divalent metal cation</name>
        <dbReference type="ChEBI" id="CHEBI:60240"/>
        <label>7</label>
        <note>in cluster A</note>
    </ligand>
</feature>
<organism>
    <name type="scientific">Morone saxatilis</name>
    <name type="common">Striped bass</name>
    <name type="synonym">Perca saxatilis</name>
    <dbReference type="NCBI Taxonomy" id="34816"/>
    <lineage>
        <taxon>Eukaryota</taxon>
        <taxon>Metazoa</taxon>
        <taxon>Chordata</taxon>
        <taxon>Craniata</taxon>
        <taxon>Vertebrata</taxon>
        <taxon>Euteleostomi</taxon>
        <taxon>Actinopterygii</taxon>
        <taxon>Neopterygii</taxon>
        <taxon>Teleostei</taxon>
        <taxon>Neoteleostei</taxon>
        <taxon>Acanthomorphata</taxon>
        <taxon>Eupercaria</taxon>
        <taxon>Moronidae</taxon>
        <taxon>Morone</taxon>
    </lineage>
</organism>
<dbReference type="EMBL" id="AF091100">
    <property type="protein sequence ID" value="AAC62501.1"/>
    <property type="molecule type" value="Genomic_DNA"/>
</dbReference>
<dbReference type="SMR" id="P62712"/>
<dbReference type="GO" id="GO:0046872">
    <property type="term" value="F:metal ion binding"/>
    <property type="evidence" value="ECO:0007669"/>
    <property type="project" value="UniProtKB-KW"/>
</dbReference>
<dbReference type="FunFam" id="4.10.10.10:FF:000001">
    <property type="entry name" value="Metallothionein"/>
    <property type="match status" value="1"/>
</dbReference>
<dbReference type="Gene3D" id="4.10.10.10">
    <property type="entry name" value="Metallothionein Isoform II"/>
    <property type="match status" value="1"/>
</dbReference>
<dbReference type="InterPro" id="IPR017854">
    <property type="entry name" value="Metalthion_dom_sf"/>
</dbReference>
<dbReference type="InterPro" id="IPR023587">
    <property type="entry name" value="Metalthion_dom_sf_vert"/>
</dbReference>
<dbReference type="InterPro" id="IPR000006">
    <property type="entry name" value="Metalthion_vert"/>
</dbReference>
<dbReference type="InterPro" id="IPR018064">
    <property type="entry name" value="Metalthion_vert_metal_BS"/>
</dbReference>
<dbReference type="PANTHER" id="PTHR23299">
    <property type="entry name" value="METALLOTHIONEIN"/>
    <property type="match status" value="1"/>
</dbReference>
<dbReference type="PANTHER" id="PTHR23299:SF24">
    <property type="entry name" value="METALLOTHIONEIN-1X"/>
    <property type="match status" value="1"/>
</dbReference>
<dbReference type="Pfam" id="PF00131">
    <property type="entry name" value="Metallothio"/>
    <property type="match status" value="1"/>
</dbReference>
<dbReference type="PRINTS" id="PR00860">
    <property type="entry name" value="MTVERTEBRATE"/>
</dbReference>
<dbReference type="SUPFAM" id="SSF57868">
    <property type="entry name" value="Metallothionein"/>
    <property type="match status" value="1"/>
</dbReference>
<dbReference type="PROSITE" id="PS00203">
    <property type="entry name" value="METALLOTHIONEIN_VRT"/>
    <property type="match status" value="1"/>
</dbReference>
<name>MTB_MORSA</name>
<gene>
    <name type="primary">mtb</name>
</gene>
<accession>P62712</accession>
<accession>O13259</accession>
<keyword id="KW-0479">Metal-binding</keyword>
<keyword id="KW-0480">Metal-thiolate cluster</keyword>
<evidence type="ECO:0000250" key="1"/>
<evidence type="ECO:0000250" key="2">
    <source>
        <dbReference type="UniProtKB" id="P02795"/>
    </source>
</evidence>
<evidence type="ECO:0000250" key="3">
    <source>
        <dbReference type="UniProtKB" id="P62339"/>
    </source>
</evidence>
<evidence type="ECO:0000305" key="4"/>
<reference key="1">
    <citation type="submission" date="1998-09" db="EMBL/GenBank/DDBJ databases">
        <title>Molecular cloning of the striped bass (Morone saxatilis) metallothionein gene (sbMT).</title>
        <authorList>
            <person name="Leclerc G.M."/>
            <person name="Leclerc G.J."/>
            <person name="Ely B."/>
        </authorList>
    </citation>
    <scope>NUCLEOTIDE SEQUENCE [GENOMIC DNA]</scope>
</reference>
<sequence>MDPCDCSKSGTCNCGGSCTCTNCSCTSCKKSCCPCCPSGCTKCASGCVCKGKTCDTSCCQ</sequence>
<comment type="function">
    <text evidence="1">Metallothioneins have a high content of cysteine residues that bind various heavy metals.</text>
</comment>
<comment type="domain">
    <text>Class I metallothioneins contain 2 metal-binding domains: four divalent ions are chelated within cluster A of the alpha domain and are coordinated via cysteinyl thiolate bridges to 11 cysteine ligands. Cluster B, the corresponding region within the beta domain, can ligate three divalent ions to 9 cysteines.</text>
</comment>
<comment type="similarity">
    <text evidence="4">Belongs to the metallothionein superfamily. Type 1 family.</text>
</comment>